<accession>Q8E5M8</accession>
<gene>
    <name evidence="1" type="primary">guaA</name>
    <name type="ordered locus">gbs0953</name>
</gene>
<comment type="function">
    <text evidence="1">Catalyzes the synthesis of GMP from XMP.</text>
</comment>
<comment type="catalytic activity">
    <reaction evidence="1">
        <text>XMP + L-glutamine + ATP + H2O = GMP + L-glutamate + AMP + diphosphate + 2 H(+)</text>
        <dbReference type="Rhea" id="RHEA:11680"/>
        <dbReference type="ChEBI" id="CHEBI:15377"/>
        <dbReference type="ChEBI" id="CHEBI:15378"/>
        <dbReference type="ChEBI" id="CHEBI:29985"/>
        <dbReference type="ChEBI" id="CHEBI:30616"/>
        <dbReference type="ChEBI" id="CHEBI:33019"/>
        <dbReference type="ChEBI" id="CHEBI:57464"/>
        <dbReference type="ChEBI" id="CHEBI:58115"/>
        <dbReference type="ChEBI" id="CHEBI:58359"/>
        <dbReference type="ChEBI" id="CHEBI:456215"/>
        <dbReference type="EC" id="6.3.5.2"/>
    </reaction>
</comment>
<comment type="pathway">
    <text evidence="1">Purine metabolism; GMP biosynthesis; GMP from XMP (L-Gln route): step 1/1.</text>
</comment>
<comment type="subunit">
    <text evidence="1">Homodimer.</text>
</comment>
<reference key="1">
    <citation type="journal article" date="2002" name="Mol. Microbiol.">
        <title>Genome sequence of Streptococcus agalactiae, a pathogen causing invasive neonatal disease.</title>
        <authorList>
            <person name="Glaser P."/>
            <person name="Rusniok C."/>
            <person name="Buchrieser C."/>
            <person name="Chevalier F."/>
            <person name="Frangeul L."/>
            <person name="Msadek T."/>
            <person name="Zouine M."/>
            <person name="Couve E."/>
            <person name="Lalioui L."/>
            <person name="Poyart C."/>
            <person name="Trieu-Cuot P."/>
            <person name="Kunst F."/>
        </authorList>
    </citation>
    <scope>NUCLEOTIDE SEQUENCE [LARGE SCALE GENOMIC DNA]</scope>
    <source>
        <strain>NEM316</strain>
    </source>
</reference>
<evidence type="ECO:0000255" key="1">
    <source>
        <dbReference type="HAMAP-Rule" id="MF_00344"/>
    </source>
</evidence>
<sequence>MTDISILNDIQKIIVLDYGSQYNQLIARRIREFGVFSELKSHKITADEIRDINPIGIVLSGGPNSVYADGAFGIDEEIFELGIPILGICYGMQLITHKLGGKVLPAGEAGHREYGQSALRLRSESALFAGTPQEQLVLMSHGDAVTEIPEGFHLVGDSVDCPFAAMENTEKQFYGIQFHPEVRHSVYGNDILKNFAVNICGARGDWSMDNFIDMEIAKIRETVGDRKVLLGLSGGVDSSVVGVLLQRAIGDQLTCIFVDHGLLRKNEGDQVMDMLGGKFGLNIIRVDASKRFLDLLSGVEDPERKRKIIGNEFVYVFDDEASKLKGVDFLAQGTLYTDIIESGTETAQTIKSHHNVGGLPEDMQFELIEPLNTLFKDEVRALGTALGMPDEVVWRQPFPGPGLAIRVMGEITEEKLETVRESDAILREEIAKAGLDRDVWQYFTVNTGVRSVGVMGDGRTYDYTIAIRAITSIDGMTADFAQLPWDVLKKISTRIVNEVDHVNRIVYDITSKPPATVEWE</sequence>
<keyword id="KW-0067">ATP-binding</keyword>
<keyword id="KW-0315">Glutamine amidotransferase</keyword>
<keyword id="KW-0332">GMP biosynthesis</keyword>
<keyword id="KW-0436">Ligase</keyword>
<keyword id="KW-0547">Nucleotide-binding</keyword>
<keyword id="KW-0658">Purine biosynthesis</keyword>
<name>GUAA_STRA3</name>
<dbReference type="EC" id="6.3.5.2" evidence="1"/>
<dbReference type="EMBL" id="AL766848">
    <property type="protein sequence ID" value="CAD46612.1"/>
    <property type="molecule type" value="Genomic_DNA"/>
</dbReference>
<dbReference type="RefSeq" id="WP_000129872.1">
    <property type="nucleotide sequence ID" value="NC_004368.1"/>
</dbReference>
<dbReference type="SMR" id="Q8E5M8"/>
<dbReference type="MEROPS" id="C26.957"/>
<dbReference type="KEGG" id="san:gbs0953"/>
<dbReference type="eggNOG" id="COG0518">
    <property type="taxonomic scope" value="Bacteria"/>
</dbReference>
<dbReference type="eggNOG" id="COG0519">
    <property type="taxonomic scope" value="Bacteria"/>
</dbReference>
<dbReference type="HOGENOM" id="CLU_014340_0_5_9"/>
<dbReference type="UniPathway" id="UPA00189">
    <property type="reaction ID" value="UER00296"/>
</dbReference>
<dbReference type="Proteomes" id="UP000000823">
    <property type="component" value="Chromosome"/>
</dbReference>
<dbReference type="GO" id="GO:0005829">
    <property type="term" value="C:cytosol"/>
    <property type="evidence" value="ECO:0007669"/>
    <property type="project" value="TreeGrafter"/>
</dbReference>
<dbReference type="GO" id="GO:0005524">
    <property type="term" value="F:ATP binding"/>
    <property type="evidence" value="ECO:0007669"/>
    <property type="project" value="UniProtKB-UniRule"/>
</dbReference>
<dbReference type="GO" id="GO:0003921">
    <property type="term" value="F:GMP synthase activity"/>
    <property type="evidence" value="ECO:0007669"/>
    <property type="project" value="InterPro"/>
</dbReference>
<dbReference type="CDD" id="cd01742">
    <property type="entry name" value="GATase1_GMP_Synthase"/>
    <property type="match status" value="1"/>
</dbReference>
<dbReference type="CDD" id="cd01997">
    <property type="entry name" value="GMP_synthase_C"/>
    <property type="match status" value="1"/>
</dbReference>
<dbReference type="FunFam" id="3.30.300.10:FF:000002">
    <property type="entry name" value="GMP synthase [glutamine-hydrolyzing]"/>
    <property type="match status" value="1"/>
</dbReference>
<dbReference type="FunFam" id="3.40.50.620:FF:000001">
    <property type="entry name" value="GMP synthase [glutamine-hydrolyzing]"/>
    <property type="match status" value="1"/>
</dbReference>
<dbReference type="FunFam" id="3.40.50.880:FF:000001">
    <property type="entry name" value="GMP synthase [glutamine-hydrolyzing]"/>
    <property type="match status" value="1"/>
</dbReference>
<dbReference type="Gene3D" id="3.30.300.10">
    <property type="match status" value="1"/>
</dbReference>
<dbReference type="Gene3D" id="3.40.50.880">
    <property type="match status" value="1"/>
</dbReference>
<dbReference type="Gene3D" id="3.40.50.620">
    <property type="entry name" value="HUPs"/>
    <property type="match status" value="1"/>
</dbReference>
<dbReference type="HAMAP" id="MF_00344">
    <property type="entry name" value="GMP_synthase"/>
    <property type="match status" value="1"/>
</dbReference>
<dbReference type="InterPro" id="IPR029062">
    <property type="entry name" value="Class_I_gatase-like"/>
</dbReference>
<dbReference type="InterPro" id="IPR017926">
    <property type="entry name" value="GATASE"/>
</dbReference>
<dbReference type="InterPro" id="IPR001674">
    <property type="entry name" value="GMP_synth_C"/>
</dbReference>
<dbReference type="InterPro" id="IPR004739">
    <property type="entry name" value="GMP_synth_GATase"/>
</dbReference>
<dbReference type="InterPro" id="IPR022955">
    <property type="entry name" value="GMP_synthase"/>
</dbReference>
<dbReference type="InterPro" id="IPR025777">
    <property type="entry name" value="GMPS_ATP_PPase_dom"/>
</dbReference>
<dbReference type="InterPro" id="IPR022310">
    <property type="entry name" value="NAD/GMP_synthase"/>
</dbReference>
<dbReference type="InterPro" id="IPR014729">
    <property type="entry name" value="Rossmann-like_a/b/a_fold"/>
</dbReference>
<dbReference type="NCBIfam" id="TIGR00884">
    <property type="entry name" value="guaA_Cterm"/>
    <property type="match status" value="1"/>
</dbReference>
<dbReference type="NCBIfam" id="TIGR00888">
    <property type="entry name" value="guaA_Nterm"/>
    <property type="match status" value="1"/>
</dbReference>
<dbReference type="NCBIfam" id="NF000848">
    <property type="entry name" value="PRK00074.1"/>
    <property type="match status" value="1"/>
</dbReference>
<dbReference type="PANTHER" id="PTHR11922:SF2">
    <property type="entry name" value="GMP SYNTHASE [GLUTAMINE-HYDROLYZING]"/>
    <property type="match status" value="1"/>
</dbReference>
<dbReference type="PANTHER" id="PTHR11922">
    <property type="entry name" value="GMP SYNTHASE-RELATED"/>
    <property type="match status" value="1"/>
</dbReference>
<dbReference type="Pfam" id="PF00117">
    <property type="entry name" value="GATase"/>
    <property type="match status" value="1"/>
</dbReference>
<dbReference type="Pfam" id="PF00958">
    <property type="entry name" value="GMP_synt_C"/>
    <property type="match status" value="1"/>
</dbReference>
<dbReference type="Pfam" id="PF02540">
    <property type="entry name" value="NAD_synthase"/>
    <property type="match status" value="1"/>
</dbReference>
<dbReference type="PRINTS" id="PR00097">
    <property type="entry name" value="ANTSNTHASEII"/>
</dbReference>
<dbReference type="PRINTS" id="PR00099">
    <property type="entry name" value="CPSGATASE"/>
</dbReference>
<dbReference type="PRINTS" id="PR00096">
    <property type="entry name" value="GATASE"/>
</dbReference>
<dbReference type="SUPFAM" id="SSF52402">
    <property type="entry name" value="Adenine nucleotide alpha hydrolases-like"/>
    <property type="match status" value="1"/>
</dbReference>
<dbReference type="SUPFAM" id="SSF52317">
    <property type="entry name" value="Class I glutamine amidotransferase-like"/>
    <property type="match status" value="1"/>
</dbReference>
<dbReference type="SUPFAM" id="SSF54810">
    <property type="entry name" value="GMP synthetase C-terminal dimerisation domain"/>
    <property type="match status" value="1"/>
</dbReference>
<dbReference type="PROSITE" id="PS51273">
    <property type="entry name" value="GATASE_TYPE_1"/>
    <property type="match status" value="1"/>
</dbReference>
<dbReference type="PROSITE" id="PS51553">
    <property type="entry name" value="GMPS_ATP_PPASE"/>
    <property type="match status" value="1"/>
</dbReference>
<organism>
    <name type="scientific">Streptococcus agalactiae serotype III (strain NEM316)</name>
    <dbReference type="NCBI Taxonomy" id="211110"/>
    <lineage>
        <taxon>Bacteria</taxon>
        <taxon>Bacillati</taxon>
        <taxon>Bacillota</taxon>
        <taxon>Bacilli</taxon>
        <taxon>Lactobacillales</taxon>
        <taxon>Streptococcaceae</taxon>
        <taxon>Streptococcus</taxon>
    </lineage>
</organism>
<proteinExistence type="inferred from homology"/>
<feature type="chain" id="PRO_0000140183" description="GMP synthase [glutamine-hydrolyzing]">
    <location>
        <begin position="1"/>
        <end position="520"/>
    </location>
</feature>
<feature type="domain" description="Glutamine amidotransferase type-1" evidence="1">
    <location>
        <begin position="12"/>
        <end position="205"/>
    </location>
</feature>
<feature type="domain" description="GMPS ATP-PPase" evidence="1">
    <location>
        <begin position="206"/>
        <end position="395"/>
    </location>
</feature>
<feature type="active site" description="Nucleophile" evidence="1">
    <location>
        <position position="89"/>
    </location>
</feature>
<feature type="active site" evidence="1">
    <location>
        <position position="179"/>
    </location>
</feature>
<feature type="active site" evidence="1">
    <location>
        <position position="181"/>
    </location>
</feature>
<feature type="binding site" evidence="1">
    <location>
        <begin position="233"/>
        <end position="239"/>
    </location>
    <ligand>
        <name>ATP</name>
        <dbReference type="ChEBI" id="CHEBI:30616"/>
    </ligand>
</feature>
<protein>
    <recommendedName>
        <fullName evidence="1">GMP synthase [glutamine-hydrolyzing]</fullName>
        <ecNumber evidence="1">6.3.5.2</ecNumber>
    </recommendedName>
    <alternativeName>
        <fullName evidence="1">GMP synthetase</fullName>
    </alternativeName>
    <alternativeName>
        <fullName evidence="1">Glutamine amidotransferase</fullName>
    </alternativeName>
</protein>